<organism>
    <name type="scientific">Mesomycoplasma hyopneumoniae (strain 232)</name>
    <name type="common">Mycoplasma hyopneumoniae</name>
    <dbReference type="NCBI Taxonomy" id="295358"/>
    <lineage>
        <taxon>Bacteria</taxon>
        <taxon>Bacillati</taxon>
        <taxon>Mycoplasmatota</taxon>
        <taxon>Mycoplasmoidales</taxon>
        <taxon>Metamycoplasmataceae</taxon>
        <taxon>Mesomycoplasma</taxon>
    </lineage>
</organism>
<protein>
    <recommendedName>
        <fullName evidence="1">Large ribosomal subunit protein uL22</fullName>
    </recommendedName>
    <alternativeName>
        <fullName evidence="3">50S ribosomal protein L22</fullName>
    </alternativeName>
</protein>
<proteinExistence type="inferred from homology"/>
<comment type="function">
    <text evidence="1">This protein binds specifically to 23S rRNA; its binding is stimulated by other ribosomal proteins, e.g. L4, L17, and L20. It is important during the early stages of 50S assembly. It makes multiple contacts with different domains of the 23S rRNA in the assembled 50S subunit and ribosome (By similarity).</text>
</comment>
<comment type="function">
    <text evidence="1">The globular domain of the protein is located near the polypeptide exit tunnel on the outside of the subunit, while an extended beta-hairpin is found that lines the wall of the exit tunnel in the center of the 70S ribosome.</text>
</comment>
<comment type="subunit">
    <text evidence="1">Part of the 50S ribosomal subunit.</text>
</comment>
<comment type="similarity">
    <text evidence="1">Belongs to the universal ribosomal protein uL22 family.</text>
</comment>
<dbReference type="EMBL" id="AE017332">
    <property type="protein sequence ID" value="AAV27449.1"/>
    <property type="molecule type" value="Genomic_DNA"/>
</dbReference>
<dbReference type="RefSeq" id="WP_011206030.1">
    <property type="nucleotide sequence ID" value="NC_006360.1"/>
</dbReference>
<dbReference type="SMR" id="Q601K9"/>
<dbReference type="KEGG" id="mhy:mhp193"/>
<dbReference type="eggNOG" id="COG0091">
    <property type="taxonomic scope" value="Bacteria"/>
</dbReference>
<dbReference type="HOGENOM" id="CLU_1545931_0_0_14"/>
<dbReference type="PhylomeDB" id="Q601K9"/>
<dbReference type="Proteomes" id="UP000006822">
    <property type="component" value="Chromosome"/>
</dbReference>
<dbReference type="GO" id="GO:0022625">
    <property type="term" value="C:cytosolic large ribosomal subunit"/>
    <property type="evidence" value="ECO:0007669"/>
    <property type="project" value="TreeGrafter"/>
</dbReference>
<dbReference type="GO" id="GO:0019843">
    <property type="term" value="F:rRNA binding"/>
    <property type="evidence" value="ECO:0007669"/>
    <property type="project" value="UniProtKB-UniRule"/>
</dbReference>
<dbReference type="GO" id="GO:0003735">
    <property type="term" value="F:structural constituent of ribosome"/>
    <property type="evidence" value="ECO:0007669"/>
    <property type="project" value="InterPro"/>
</dbReference>
<dbReference type="GO" id="GO:0006412">
    <property type="term" value="P:translation"/>
    <property type="evidence" value="ECO:0007669"/>
    <property type="project" value="UniProtKB-UniRule"/>
</dbReference>
<dbReference type="CDD" id="cd00336">
    <property type="entry name" value="Ribosomal_L22"/>
    <property type="match status" value="1"/>
</dbReference>
<dbReference type="Gene3D" id="3.90.470.10">
    <property type="entry name" value="Ribosomal protein L22/L17"/>
    <property type="match status" value="1"/>
</dbReference>
<dbReference type="HAMAP" id="MF_01331_B">
    <property type="entry name" value="Ribosomal_uL22_B"/>
    <property type="match status" value="1"/>
</dbReference>
<dbReference type="InterPro" id="IPR001063">
    <property type="entry name" value="Ribosomal_uL22"/>
</dbReference>
<dbReference type="InterPro" id="IPR005727">
    <property type="entry name" value="Ribosomal_uL22_bac/chlpt-type"/>
</dbReference>
<dbReference type="InterPro" id="IPR047867">
    <property type="entry name" value="Ribosomal_uL22_bac/org-type"/>
</dbReference>
<dbReference type="InterPro" id="IPR036394">
    <property type="entry name" value="Ribosomal_uL22_sf"/>
</dbReference>
<dbReference type="NCBIfam" id="TIGR01044">
    <property type="entry name" value="rplV_bact"/>
    <property type="match status" value="1"/>
</dbReference>
<dbReference type="PANTHER" id="PTHR13501">
    <property type="entry name" value="CHLOROPLAST 50S RIBOSOMAL PROTEIN L22-RELATED"/>
    <property type="match status" value="1"/>
</dbReference>
<dbReference type="PANTHER" id="PTHR13501:SF8">
    <property type="entry name" value="LARGE RIBOSOMAL SUBUNIT PROTEIN UL22M"/>
    <property type="match status" value="1"/>
</dbReference>
<dbReference type="Pfam" id="PF00237">
    <property type="entry name" value="Ribosomal_L22"/>
    <property type="match status" value="1"/>
</dbReference>
<dbReference type="SUPFAM" id="SSF54843">
    <property type="entry name" value="Ribosomal protein L22"/>
    <property type="match status" value="1"/>
</dbReference>
<name>RL22_MESH2</name>
<feature type="chain" id="PRO_0000243170" description="Large ribosomal subunit protein uL22">
    <location>
        <begin position="1"/>
        <end position="203"/>
    </location>
</feature>
<feature type="region of interest" description="Disordered" evidence="2">
    <location>
        <begin position="116"/>
        <end position="203"/>
    </location>
</feature>
<feature type="compositionally biased region" description="Polar residues" evidence="2">
    <location>
        <begin position="116"/>
        <end position="126"/>
    </location>
</feature>
<feature type="compositionally biased region" description="Polar residues" evidence="2">
    <location>
        <begin position="134"/>
        <end position="167"/>
    </location>
</feature>
<feature type="compositionally biased region" description="Low complexity" evidence="2">
    <location>
        <begin position="168"/>
        <end position="194"/>
    </location>
</feature>
<sequence>MKVENHNLAVASLKTQRISAFKARLVAVLLKGKKVSDALAILAHTKKKASPIFTKLINSAVANAINNHGFEHSNLIIKAAIVNEGPTLKRFRPRAKGAASQILKRTSHFKVILASQNGGESQNQEYQEAEKNLVSKSPENTQSGALSQQIRGEQPQNDPENGVDSQLSAKTNSTTTAKKTDLADNNTKNDATNTVLAQEKEVK</sequence>
<reference key="1">
    <citation type="journal article" date="2004" name="J. Bacteriol.">
        <title>The genome sequence of Mycoplasma hyopneumoniae strain 232, the agent of swine mycoplasmosis.</title>
        <authorList>
            <person name="Minion F.C."/>
            <person name="Lefkowitz E.J."/>
            <person name="Madsen M.L."/>
            <person name="Cleary B.J."/>
            <person name="Swartzell S.M."/>
            <person name="Mahairas G.G."/>
        </authorList>
    </citation>
    <scope>NUCLEOTIDE SEQUENCE [LARGE SCALE GENOMIC DNA]</scope>
    <source>
        <strain>232</strain>
    </source>
</reference>
<evidence type="ECO:0000255" key="1">
    <source>
        <dbReference type="HAMAP-Rule" id="MF_01331"/>
    </source>
</evidence>
<evidence type="ECO:0000256" key="2">
    <source>
        <dbReference type="SAM" id="MobiDB-lite"/>
    </source>
</evidence>
<evidence type="ECO:0000305" key="3"/>
<keyword id="KW-0687">Ribonucleoprotein</keyword>
<keyword id="KW-0689">Ribosomal protein</keyword>
<keyword id="KW-0694">RNA-binding</keyword>
<keyword id="KW-0699">rRNA-binding</keyword>
<gene>
    <name evidence="1" type="primary">rplV</name>
    <name type="ordered locus">mhp193</name>
</gene>
<accession>Q601K9</accession>